<name>YBEY_RENSM</name>
<dbReference type="EC" id="3.1.-.-" evidence="1"/>
<dbReference type="EMBL" id="CP000910">
    <property type="protein sequence ID" value="ABY23654.1"/>
    <property type="molecule type" value="Genomic_DNA"/>
</dbReference>
<dbReference type="RefSeq" id="WP_012245324.1">
    <property type="nucleotide sequence ID" value="NC_010168.1"/>
</dbReference>
<dbReference type="SMR" id="A9WQS5"/>
<dbReference type="STRING" id="288705.RSal33209_1921"/>
<dbReference type="KEGG" id="rsa:RSal33209_1921"/>
<dbReference type="eggNOG" id="COG0319">
    <property type="taxonomic scope" value="Bacteria"/>
</dbReference>
<dbReference type="HOGENOM" id="CLU_106710_3_2_11"/>
<dbReference type="Proteomes" id="UP000002007">
    <property type="component" value="Chromosome"/>
</dbReference>
<dbReference type="GO" id="GO:0005737">
    <property type="term" value="C:cytoplasm"/>
    <property type="evidence" value="ECO:0007669"/>
    <property type="project" value="UniProtKB-SubCell"/>
</dbReference>
<dbReference type="GO" id="GO:0004222">
    <property type="term" value="F:metalloendopeptidase activity"/>
    <property type="evidence" value="ECO:0007669"/>
    <property type="project" value="InterPro"/>
</dbReference>
<dbReference type="GO" id="GO:0004521">
    <property type="term" value="F:RNA endonuclease activity"/>
    <property type="evidence" value="ECO:0007669"/>
    <property type="project" value="UniProtKB-UniRule"/>
</dbReference>
<dbReference type="GO" id="GO:0008270">
    <property type="term" value="F:zinc ion binding"/>
    <property type="evidence" value="ECO:0007669"/>
    <property type="project" value="UniProtKB-UniRule"/>
</dbReference>
<dbReference type="GO" id="GO:0006364">
    <property type="term" value="P:rRNA processing"/>
    <property type="evidence" value="ECO:0007669"/>
    <property type="project" value="UniProtKB-UniRule"/>
</dbReference>
<dbReference type="Gene3D" id="3.40.390.30">
    <property type="entry name" value="Metalloproteases ('zincins'), catalytic domain"/>
    <property type="match status" value="1"/>
</dbReference>
<dbReference type="HAMAP" id="MF_00009">
    <property type="entry name" value="Endoribonucl_YbeY"/>
    <property type="match status" value="1"/>
</dbReference>
<dbReference type="InterPro" id="IPR023091">
    <property type="entry name" value="MetalPrtase_cat_dom_sf_prd"/>
</dbReference>
<dbReference type="InterPro" id="IPR002036">
    <property type="entry name" value="YbeY"/>
</dbReference>
<dbReference type="InterPro" id="IPR020549">
    <property type="entry name" value="YbeY_CS"/>
</dbReference>
<dbReference type="NCBIfam" id="TIGR00043">
    <property type="entry name" value="rRNA maturation RNase YbeY"/>
    <property type="match status" value="1"/>
</dbReference>
<dbReference type="PANTHER" id="PTHR46986">
    <property type="entry name" value="ENDORIBONUCLEASE YBEY, CHLOROPLASTIC"/>
    <property type="match status" value="1"/>
</dbReference>
<dbReference type="PANTHER" id="PTHR46986:SF1">
    <property type="entry name" value="ENDORIBONUCLEASE YBEY, CHLOROPLASTIC"/>
    <property type="match status" value="1"/>
</dbReference>
<dbReference type="Pfam" id="PF02130">
    <property type="entry name" value="YbeY"/>
    <property type="match status" value="1"/>
</dbReference>
<dbReference type="SUPFAM" id="SSF55486">
    <property type="entry name" value="Metalloproteases ('zincins'), catalytic domain"/>
    <property type="match status" value="1"/>
</dbReference>
<dbReference type="PROSITE" id="PS01306">
    <property type="entry name" value="UPF0054"/>
    <property type="match status" value="1"/>
</dbReference>
<gene>
    <name evidence="1" type="primary">ybeY</name>
    <name type="ordered locus">RSal33209_1921</name>
</gene>
<organism>
    <name type="scientific">Renibacterium salmoninarum (strain ATCC 33209 / DSM 20767 / JCM 11484 / NBRC 15589 / NCIMB 2235)</name>
    <dbReference type="NCBI Taxonomy" id="288705"/>
    <lineage>
        <taxon>Bacteria</taxon>
        <taxon>Bacillati</taxon>
        <taxon>Actinomycetota</taxon>
        <taxon>Actinomycetes</taxon>
        <taxon>Micrococcales</taxon>
        <taxon>Micrococcaceae</taxon>
        <taxon>Renibacterium</taxon>
    </lineage>
</organism>
<proteinExistence type="inferred from homology"/>
<reference key="1">
    <citation type="journal article" date="2008" name="J. Bacteriol.">
        <title>Genome sequence of the fish pathogen Renibacterium salmoninarum suggests reductive evolution away from an environmental Arthrobacter ancestor.</title>
        <authorList>
            <person name="Wiens G.D."/>
            <person name="Rockey D.D."/>
            <person name="Wu Z."/>
            <person name="Chang J."/>
            <person name="Levy R."/>
            <person name="Crane S."/>
            <person name="Chen D.S."/>
            <person name="Capri G.R."/>
            <person name="Burnett J.R."/>
            <person name="Sudheesh P.S."/>
            <person name="Schipma M.J."/>
            <person name="Burd H."/>
            <person name="Bhattacharyya A."/>
            <person name="Rhodes L.D."/>
            <person name="Kaul R."/>
            <person name="Strom M.S."/>
        </authorList>
    </citation>
    <scope>NUCLEOTIDE SEQUENCE [LARGE SCALE GENOMIC DNA]</scope>
    <source>
        <strain>ATCC 33209 / DSM 20767 / JCM 11484 / NBRC 15589 / NCIMB 2235</strain>
    </source>
</reference>
<comment type="function">
    <text evidence="1">Single strand-specific metallo-endoribonuclease involved in late-stage 70S ribosome quality control and in maturation of the 3' terminus of the 16S rRNA.</text>
</comment>
<comment type="cofactor">
    <cofactor evidence="1">
        <name>Zn(2+)</name>
        <dbReference type="ChEBI" id="CHEBI:29105"/>
    </cofactor>
    <text evidence="1">Binds 1 zinc ion.</text>
</comment>
<comment type="subcellular location">
    <subcellularLocation>
        <location evidence="1">Cytoplasm</location>
    </subcellularLocation>
</comment>
<comment type="similarity">
    <text evidence="1">Belongs to the endoribonuclease YbeY family.</text>
</comment>
<protein>
    <recommendedName>
        <fullName evidence="1">Endoribonuclease YbeY</fullName>
        <ecNumber evidence="1">3.1.-.-</ecNumber>
    </recommendedName>
</protein>
<accession>A9WQS5</accession>
<evidence type="ECO:0000255" key="1">
    <source>
        <dbReference type="HAMAP-Rule" id="MF_00009"/>
    </source>
</evidence>
<feature type="chain" id="PRO_1000073913" description="Endoribonuclease YbeY">
    <location>
        <begin position="1"/>
        <end position="157"/>
    </location>
</feature>
<feature type="binding site" evidence="1">
    <location>
        <position position="116"/>
    </location>
    <ligand>
        <name>Zn(2+)</name>
        <dbReference type="ChEBI" id="CHEBI:29105"/>
        <note>catalytic</note>
    </ligand>
</feature>
<feature type="binding site" evidence="1">
    <location>
        <position position="120"/>
    </location>
    <ligand>
        <name>Zn(2+)</name>
        <dbReference type="ChEBI" id="CHEBI:29105"/>
        <note>catalytic</note>
    </ligand>
</feature>
<feature type="binding site" evidence="1">
    <location>
        <position position="126"/>
    </location>
    <ligand>
        <name>Zn(2+)</name>
        <dbReference type="ChEBI" id="CHEBI:29105"/>
        <note>catalytic</note>
    </ligand>
</feature>
<keyword id="KW-0963">Cytoplasm</keyword>
<keyword id="KW-0255">Endonuclease</keyword>
<keyword id="KW-0378">Hydrolase</keyword>
<keyword id="KW-0479">Metal-binding</keyword>
<keyword id="KW-0540">Nuclease</keyword>
<keyword id="KW-1185">Reference proteome</keyword>
<keyword id="KW-0690">Ribosome biogenesis</keyword>
<keyword id="KW-0698">rRNA processing</keyword>
<keyword id="KW-0862">Zinc</keyword>
<sequence>MSVEVNNESGVELPEAELVRLSRFVFEKLYLHPQTELSIILADREAMEKLHVEWMYEPGATDVLSFPMDELRPGTVSRPAPAGLLGDIVICPQVAQEQAQAGGHSVEDELLLLTTHGLLHLLGYDHEDPEEKAEMFGLQRELLTSFLGRDAPAETTA</sequence>